<reference key="1">
    <citation type="submission" date="2004-11" db="EMBL/GenBank/DDBJ databases">
        <authorList>
            <consortium name="The German cDNA consortium"/>
        </authorList>
    </citation>
    <scope>NUCLEOTIDE SEQUENCE [LARGE SCALE MRNA]</scope>
    <source>
        <tissue>Kidney</tissue>
    </source>
</reference>
<gene>
    <name type="primary">MYNN</name>
</gene>
<name>MYNN_PONAB</name>
<feature type="chain" id="PRO_0000248219" description="Myoneurin">
    <location>
        <begin position="1"/>
        <end position="582"/>
    </location>
</feature>
<feature type="domain" description="BTB" evidence="4">
    <location>
        <begin position="24"/>
        <end position="89"/>
    </location>
</feature>
<feature type="zinc finger region" description="C2H2-type 1; degenerate" evidence="5">
    <location>
        <begin position="302"/>
        <end position="324"/>
    </location>
</feature>
<feature type="zinc finger region" description="C2H2-type 2" evidence="5">
    <location>
        <begin position="330"/>
        <end position="352"/>
    </location>
</feature>
<feature type="zinc finger region" description="C2H2-type 3" evidence="5">
    <location>
        <begin position="358"/>
        <end position="381"/>
    </location>
</feature>
<feature type="zinc finger region" description="C2H2-type 4" evidence="5">
    <location>
        <begin position="387"/>
        <end position="409"/>
    </location>
</feature>
<feature type="zinc finger region" description="C2H2-type 5" evidence="5">
    <location>
        <begin position="415"/>
        <end position="437"/>
    </location>
</feature>
<feature type="zinc finger region" description="C2H2-type 6" evidence="5">
    <location>
        <begin position="443"/>
        <end position="465"/>
    </location>
</feature>
<feature type="zinc finger region" description="C2H2-type 7" evidence="5">
    <location>
        <begin position="471"/>
        <end position="494"/>
    </location>
</feature>
<feature type="region of interest" description="Disordered" evidence="6">
    <location>
        <begin position="169"/>
        <end position="197"/>
    </location>
</feature>
<feature type="region of interest" description="Disordered" evidence="6">
    <location>
        <begin position="489"/>
        <end position="538"/>
    </location>
</feature>
<feature type="short sequence motif" description="Nuclear localization signal" evidence="3">
    <location>
        <begin position="174"/>
        <end position="190"/>
    </location>
</feature>
<feature type="short sequence motif" description="Nuclear localization signal" evidence="3">
    <location>
        <begin position="257"/>
        <end position="262"/>
    </location>
</feature>
<feature type="compositionally biased region" description="Polar residues" evidence="6">
    <location>
        <begin position="188"/>
        <end position="197"/>
    </location>
</feature>
<feature type="compositionally biased region" description="Basic and acidic residues" evidence="6">
    <location>
        <begin position="495"/>
        <end position="511"/>
    </location>
</feature>
<feature type="compositionally biased region" description="Polar residues" evidence="6">
    <location>
        <begin position="512"/>
        <end position="522"/>
    </location>
</feature>
<feature type="modified residue" description="Phosphoserine" evidence="2">
    <location>
        <position position="289"/>
    </location>
</feature>
<protein>
    <recommendedName>
        <fullName>Myoneurin</fullName>
    </recommendedName>
</protein>
<proteinExistence type="evidence at transcript level"/>
<organism>
    <name type="scientific">Pongo abelii</name>
    <name type="common">Sumatran orangutan</name>
    <name type="synonym">Pongo pygmaeus abelii</name>
    <dbReference type="NCBI Taxonomy" id="9601"/>
    <lineage>
        <taxon>Eukaryota</taxon>
        <taxon>Metazoa</taxon>
        <taxon>Chordata</taxon>
        <taxon>Craniata</taxon>
        <taxon>Vertebrata</taxon>
        <taxon>Euteleostomi</taxon>
        <taxon>Mammalia</taxon>
        <taxon>Eutheria</taxon>
        <taxon>Euarchontoglires</taxon>
        <taxon>Primates</taxon>
        <taxon>Haplorrhini</taxon>
        <taxon>Catarrhini</taxon>
        <taxon>Hominidae</taxon>
        <taxon>Pongo</taxon>
    </lineage>
</organism>
<evidence type="ECO:0000250" key="1"/>
<evidence type="ECO:0000250" key="2">
    <source>
        <dbReference type="UniProtKB" id="Q9NPC7"/>
    </source>
</evidence>
<evidence type="ECO:0000255" key="3"/>
<evidence type="ECO:0000255" key="4">
    <source>
        <dbReference type="PROSITE-ProRule" id="PRU00037"/>
    </source>
</evidence>
<evidence type="ECO:0000255" key="5">
    <source>
        <dbReference type="PROSITE-ProRule" id="PRU00042"/>
    </source>
</evidence>
<evidence type="ECO:0000256" key="6">
    <source>
        <dbReference type="SAM" id="MobiDB-lite"/>
    </source>
</evidence>
<evidence type="ECO:0000305" key="7"/>
<comment type="subcellular location">
    <subcellularLocation>
        <location evidence="1">Nucleus</location>
    </subcellularLocation>
</comment>
<comment type="similarity">
    <text evidence="7">Belongs to the krueppel C2H2-type zinc-finger protein family.</text>
</comment>
<keyword id="KW-0238">DNA-binding</keyword>
<keyword id="KW-0479">Metal-binding</keyword>
<keyword id="KW-0539">Nucleus</keyword>
<keyword id="KW-0597">Phosphoprotein</keyword>
<keyword id="KW-1185">Reference proteome</keyword>
<keyword id="KW-0677">Repeat</keyword>
<keyword id="KW-0804">Transcription</keyword>
<keyword id="KW-0805">Transcription regulation</keyword>
<keyword id="KW-0862">Zinc</keyword>
<keyword id="KW-0863">Zinc-finger</keyword>
<accession>Q5R5N5</accession>
<dbReference type="EMBL" id="CR860822">
    <property type="protein sequence ID" value="CAH92931.1"/>
    <property type="molecule type" value="mRNA"/>
</dbReference>
<dbReference type="RefSeq" id="NP_001126725.1">
    <property type="nucleotide sequence ID" value="NM_001133253.1"/>
</dbReference>
<dbReference type="SMR" id="Q5R5N5"/>
<dbReference type="STRING" id="9601.ENSPPYP00000015960"/>
<dbReference type="GeneID" id="100173727"/>
<dbReference type="KEGG" id="pon:100173727"/>
<dbReference type="CTD" id="55892"/>
<dbReference type="eggNOG" id="KOG1721">
    <property type="taxonomic scope" value="Eukaryota"/>
</dbReference>
<dbReference type="InParanoid" id="Q5R5N5"/>
<dbReference type="OrthoDB" id="8117402at2759"/>
<dbReference type="Proteomes" id="UP000001595">
    <property type="component" value="Unplaced"/>
</dbReference>
<dbReference type="GO" id="GO:0005634">
    <property type="term" value="C:nucleus"/>
    <property type="evidence" value="ECO:0007669"/>
    <property type="project" value="UniProtKB-SubCell"/>
</dbReference>
<dbReference type="GO" id="GO:0000981">
    <property type="term" value="F:DNA-binding transcription factor activity, RNA polymerase II-specific"/>
    <property type="evidence" value="ECO:0007669"/>
    <property type="project" value="TreeGrafter"/>
</dbReference>
<dbReference type="GO" id="GO:0000978">
    <property type="term" value="F:RNA polymerase II cis-regulatory region sequence-specific DNA binding"/>
    <property type="evidence" value="ECO:0007669"/>
    <property type="project" value="TreeGrafter"/>
</dbReference>
<dbReference type="GO" id="GO:0008270">
    <property type="term" value="F:zinc ion binding"/>
    <property type="evidence" value="ECO:0007669"/>
    <property type="project" value="UniProtKB-KW"/>
</dbReference>
<dbReference type="CDD" id="cd18217">
    <property type="entry name" value="BTB_POZ_ZBTB31_myoneurin"/>
    <property type="match status" value="1"/>
</dbReference>
<dbReference type="FunFam" id="3.30.160.60:FF:000029">
    <property type="entry name" value="GLI family zinc finger 4"/>
    <property type="match status" value="1"/>
</dbReference>
<dbReference type="FunFam" id="3.30.160.60:FF:000678">
    <property type="entry name" value="Myoneurin isoform X1"/>
    <property type="match status" value="1"/>
</dbReference>
<dbReference type="FunFam" id="3.30.160.60:FF:000472">
    <property type="entry name" value="myoneurin isoform X1"/>
    <property type="match status" value="1"/>
</dbReference>
<dbReference type="FunFam" id="3.30.160.60:FF:000816">
    <property type="entry name" value="myoneurin isoform X1"/>
    <property type="match status" value="1"/>
</dbReference>
<dbReference type="FunFam" id="3.30.160.60:FF:001185">
    <property type="entry name" value="myoneurin isoform X1"/>
    <property type="match status" value="1"/>
</dbReference>
<dbReference type="FunFam" id="3.30.710.10:FF:000051">
    <property type="entry name" value="myoneurin isoform X1"/>
    <property type="match status" value="1"/>
</dbReference>
<dbReference type="FunFam" id="3.30.160.60:FF:002586">
    <property type="entry name" value="Zinc finger protein 787"/>
    <property type="match status" value="1"/>
</dbReference>
<dbReference type="Gene3D" id="3.30.160.60">
    <property type="entry name" value="Classic Zinc Finger"/>
    <property type="match status" value="7"/>
</dbReference>
<dbReference type="Gene3D" id="3.30.710.10">
    <property type="entry name" value="Potassium Channel Kv1.1, Chain A"/>
    <property type="match status" value="1"/>
</dbReference>
<dbReference type="InterPro" id="IPR000210">
    <property type="entry name" value="BTB/POZ_dom"/>
</dbReference>
<dbReference type="InterPro" id="IPR011333">
    <property type="entry name" value="SKP1/BTB/POZ_sf"/>
</dbReference>
<dbReference type="InterPro" id="IPR036236">
    <property type="entry name" value="Znf_C2H2_sf"/>
</dbReference>
<dbReference type="InterPro" id="IPR013087">
    <property type="entry name" value="Znf_C2H2_type"/>
</dbReference>
<dbReference type="InterPro" id="IPR050457">
    <property type="entry name" value="ZnFinger_BTB_dom_contain"/>
</dbReference>
<dbReference type="PANTHER" id="PTHR46105">
    <property type="entry name" value="AGAP004733-PA"/>
    <property type="match status" value="1"/>
</dbReference>
<dbReference type="PANTHER" id="PTHR46105:SF31">
    <property type="entry name" value="LOW QUALITY PROTEIN: ZINC FINGER PROTEIN 721-RELATED"/>
    <property type="match status" value="1"/>
</dbReference>
<dbReference type="Pfam" id="PF00651">
    <property type="entry name" value="BTB"/>
    <property type="match status" value="1"/>
</dbReference>
<dbReference type="Pfam" id="PF00096">
    <property type="entry name" value="zf-C2H2"/>
    <property type="match status" value="4"/>
</dbReference>
<dbReference type="Pfam" id="PF13912">
    <property type="entry name" value="zf-C2H2_6"/>
    <property type="match status" value="1"/>
</dbReference>
<dbReference type="SMART" id="SM00225">
    <property type="entry name" value="BTB"/>
    <property type="match status" value="1"/>
</dbReference>
<dbReference type="SMART" id="SM00355">
    <property type="entry name" value="ZnF_C2H2"/>
    <property type="match status" value="7"/>
</dbReference>
<dbReference type="SUPFAM" id="SSF57667">
    <property type="entry name" value="beta-beta-alpha zinc fingers"/>
    <property type="match status" value="4"/>
</dbReference>
<dbReference type="SUPFAM" id="SSF54695">
    <property type="entry name" value="POZ domain"/>
    <property type="match status" value="1"/>
</dbReference>
<dbReference type="PROSITE" id="PS50097">
    <property type="entry name" value="BTB"/>
    <property type="match status" value="1"/>
</dbReference>
<dbReference type="PROSITE" id="PS00028">
    <property type="entry name" value="ZINC_FINGER_C2H2_1"/>
    <property type="match status" value="6"/>
</dbReference>
<dbReference type="PROSITE" id="PS50157">
    <property type="entry name" value="ZINC_FINGER_C2H2_2"/>
    <property type="match status" value="7"/>
</dbReference>
<sequence>MQYSHHCEHLLERLNKQREAGFLCDCTIVIGEFQFKAHRNVLASFSEYFGAIYRSTSENNVFLDQSQVKADGFQKLLEFIYTGTLNLDSWNVKEIHQAADYLKVEEVVTKCKIKMEDFAFIANPSSTEISSITGNIELNQQTCLLTLRDYNNREKSEVSTDLIQANPKQGALAKKSSQTKKKKKAFNSPKTGQNKTVQYPSDILENASVDLFLDANKLPTPVVEQVAQINDNSELELTSVVENTFPAQDIVHTVTVKRKRGKSQPNCALKEHSMSNIASIKSPYEAENSGEELDQRYSKAKPMCNTRGKVFSEASSLRRHMRIHKGVKPYVCHLCGKAFTQCNQLKTHVRTHTGEKPYKCELCDKGFAQKCQLVFHSRMHHGEEKPYKCDVCNLQFATSSNLKIHARKHSGEKPYVCDRCGQRFAQASTLTYHVRRHTGEKPYVCDTCGKAFAVSSSLITHSRKHTGERPFICELCGNSYTDIKNLKKHKTKVHSGADKTPDSSAEDHTLSEQDSIQKSPLSETMDVKPSDTTLPLALPLGTEDHHMLLPVTDTQSPTSDTLLRSTVNGYSEPQLIFLQQLY</sequence>